<feature type="chain" id="PRO_0000199104" description="Allophycocyanin beta chain">
    <location>
        <begin position="1"/>
        <end position="161"/>
    </location>
</feature>
<feature type="binding site" description="covalent" evidence="1">
    <location>
        <position position="81"/>
    </location>
    <ligand>
        <name>(2R,3E)-phycocyanobilin</name>
        <dbReference type="ChEBI" id="CHEBI:85275"/>
    </ligand>
</feature>
<feature type="modified residue" description="N4-methylasparagine" evidence="2">
    <location>
        <position position="71"/>
    </location>
</feature>
<dbReference type="EMBL" id="X04716">
    <property type="protein sequence ID" value="CAA28422.1"/>
    <property type="molecule type" value="Genomic_DNA"/>
</dbReference>
<dbReference type="EMBL" id="AP008231">
    <property type="protein sequence ID" value="BAD79377.1"/>
    <property type="molecule type" value="Genomic_DNA"/>
</dbReference>
<dbReference type="RefSeq" id="WP_011243499.1">
    <property type="nucleotide sequence ID" value="NZ_CP085785.1"/>
</dbReference>
<dbReference type="SMR" id="P06113"/>
<dbReference type="iPTMnet" id="P06113"/>
<dbReference type="GeneID" id="72429142"/>
<dbReference type="KEGG" id="syc:syc1187_d"/>
<dbReference type="eggNOG" id="ENOG502Z7X0">
    <property type="taxonomic scope" value="Bacteria"/>
</dbReference>
<dbReference type="Proteomes" id="UP000001175">
    <property type="component" value="Chromosome"/>
</dbReference>
<dbReference type="GO" id="GO:0030089">
    <property type="term" value="C:phycobilisome"/>
    <property type="evidence" value="ECO:0007669"/>
    <property type="project" value="UniProtKB-KW"/>
</dbReference>
<dbReference type="GO" id="GO:0031676">
    <property type="term" value="C:plasma membrane-derived thylakoid membrane"/>
    <property type="evidence" value="ECO:0007669"/>
    <property type="project" value="UniProtKB-SubCell"/>
</dbReference>
<dbReference type="GO" id="GO:0015979">
    <property type="term" value="P:photosynthesis"/>
    <property type="evidence" value="ECO:0007669"/>
    <property type="project" value="UniProtKB-KW"/>
</dbReference>
<dbReference type="CDD" id="cd12126">
    <property type="entry name" value="APC_beta"/>
    <property type="match status" value="1"/>
</dbReference>
<dbReference type="Gene3D" id="1.10.490.20">
    <property type="entry name" value="Phycocyanins"/>
    <property type="match status" value="1"/>
</dbReference>
<dbReference type="InterPro" id="IPR006245">
    <property type="entry name" value="Allophycocyanin_b"/>
</dbReference>
<dbReference type="InterPro" id="IPR009050">
    <property type="entry name" value="Globin-like_sf"/>
</dbReference>
<dbReference type="InterPro" id="IPR012128">
    <property type="entry name" value="Phycobilisome_asu/bsu"/>
</dbReference>
<dbReference type="InterPro" id="IPR038719">
    <property type="entry name" value="Phycobilisome_asu/bsu_sf"/>
</dbReference>
<dbReference type="NCBIfam" id="TIGR01337">
    <property type="entry name" value="apcB"/>
    <property type="match status" value="1"/>
</dbReference>
<dbReference type="PANTHER" id="PTHR34011:SF3">
    <property type="entry name" value="ALLOPHYCOCYANIN BETA CHAIN"/>
    <property type="match status" value="1"/>
</dbReference>
<dbReference type="PANTHER" id="PTHR34011">
    <property type="entry name" value="PHYCOBILISOME 32.1 KDA LINKER POLYPEPTIDE, PHYCOCYANIN-ASSOCIATED, ROD 2-RELATED"/>
    <property type="match status" value="1"/>
</dbReference>
<dbReference type="Pfam" id="PF00502">
    <property type="entry name" value="Phycobilisome"/>
    <property type="match status" value="1"/>
</dbReference>
<dbReference type="PIRSF" id="PIRSF000081">
    <property type="entry name" value="Phycocyanin"/>
    <property type="match status" value="1"/>
</dbReference>
<dbReference type="SUPFAM" id="SSF46458">
    <property type="entry name" value="Globin-like"/>
    <property type="match status" value="1"/>
</dbReference>
<evidence type="ECO:0000250" key="1"/>
<evidence type="ECO:0000269" key="2">
    <source>
    </source>
</evidence>
<evidence type="ECO:0000305" key="3"/>
<accession>P06113</accession>
<name>APCB_SYNP6</name>
<keyword id="KW-0042">Antenna complex</keyword>
<keyword id="KW-0089">Bile pigment</keyword>
<keyword id="KW-0157">Chromophore</keyword>
<keyword id="KW-0249">Electron transport</keyword>
<keyword id="KW-0472">Membrane</keyword>
<keyword id="KW-0488">Methylation</keyword>
<keyword id="KW-0602">Photosynthesis</keyword>
<keyword id="KW-0605">Phycobilisome</keyword>
<keyword id="KW-0793">Thylakoid</keyword>
<keyword id="KW-0813">Transport</keyword>
<comment type="function">
    <text>Light-harvesting photosynthetic bile pigment-protein from the phycobiliprotein complex. Allophycocyanin has a maximum absorption at approximately 650 nanometers.</text>
</comment>
<comment type="subunit">
    <text>Heterodimer of an alpha and a beta chain.</text>
</comment>
<comment type="subcellular location">
    <subcellularLocation>
        <location>Cellular thylakoid membrane</location>
        <topology>Peripheral membrane protein</topology>
        <orientation>Cytoplasmic side</orientation>
    </subcellularLocation>
    <text>Forms the core of the phycobilisome.</text>
</comment>
<comment type="PTM">
    <text evidence="1">Contains one covalently linked phycocyanobilin chromophore.</text>
</comment>
<comment type="similarity">
    <text evidence="3">Belongs to the phycobiliprotein family.</text>
</comment>
<sequence length="161" mass="17393">MQDAITAVINASDVQGKYLDSSALDRLKSYFQSGELRVRAAATISANSALIVKEAVAKSLLYSDITRPGGNMYTTRRYAACIRDLEYYLRYATYAMLAGDTSILDERVLNGLKETYNSLGVPIGATVQAIQAIKEVTASLVGPDAGREMGVYLDYISSGLS</sequence>
<organism>
    <name type="scientific">Synechococcus sp. (strain ATCC 27144 / PCC 6301 / SAUG 1402/1)</name>
    <name type="common">Anacystis nidulans</name>
    <dbReference type="NCBI Taxonomy" id="269084"/>
    <lineage>
        <taxon>Bacteria</taxon>
        <taxon>Bacillati</taxon>
        <taxon>Cyanobacteriota</taxon>
        <taxon>Cyanophyceae</taxon>
        <taxon>Synechococcales</taxon>
        <taxon>Synechococcaceae</taxon>
        <taxon>Synechococcus</taxon>
    </lineage>
</organism>
<gene>
    <name type="primary">apcB</name>
    <name type="ordered locus">syc1187_d</name>
</gene>
<protein>
    <recommendedName>
        <fullName>Allophycocyanin beta chain</fullName>
    </recommendedName>
</protein>
<proteinExistence type="evidence at protein level"/>
<reference key="1">
    <citation type="journal article" date="1986" name="Mol. Gen. Genet.">
        <title>Organization and nucleotide sequence of genes encoding core components of the phycobilisomes from Synechococcus 6301.</title>
        <authorList>
            <person name="Houmard J."/>
            <person name="Mazel D."/>
            <person name="Moguet C."/>
            <person name="Bryant D.A."/>
            <person name="Tandeau de Marsac N."/>
        </authorList>
    </citation>
    <scope>NUCLEOTIDE SEQUENCE [GENOMIC DNA]</scope>
</reference>
<reference key="2">
    <citation type="journal article" date="2007" name="Photosyn. Res.">
        <title>Complete nucleotide sequence of the freshwater unicellular cyanobacterium Synechococcus elongatus PCC 6301 chromosome: gene content and organization.</title>
        <authorList>
            <person name="Sugita C."/>
            <person name="Ogata K."/>
            <person name="Shikata M."/>
            <person name="Jikuya H."/>
            <person name="Takano J."/>
            <person name="Furumichi M."/>
            <person name="Kanehisa M."/>
            <person name="Omata T."/>
            <person name="Sugiura M."/>
            <person name="Sugita M."/>
        </authorList>
    </citation>
    <scope>NUCLEOTIDE SEQUENCE [LARGE SCALE GENOMIC DNA]</scope>
    <source>
        <strain>ATCC 27144 / PCC 6301 / SAUG 1402/1</strain>
    </source>
</reference>
<reference key="3">
    <citation type="journal article" date="1986" name="J. Biol. Chem.">
        <title>Post-translational methylation of asparaginyl residues. Identification of beta-71 gamma-N-methylasparagine in allophycocyanin.</title>
        <authorList>
            <person name="Klotz A.V."/>
            <person name="Leary J.A."/>
            <person name="Glazer A.N."/>
        </authorList>
    </citation>
    <scope>METHYLATION AT ASN-71</scope>
</reference>